<gene>
    <name evidence="1" type="primary">thiG</name>
    <name type="ordered locus">Synpcc7942_0576</name>
</gene>
<accession>Q31QR1</accession>
<name>THIG_SYNE7</name>
<dbReference type="EC" id="2.8.1.10" evidence="1"/>
<dbReference type="EMBL" id="CP000100">
    <property type="protein sequence ID" value="ABB56608.1"/>
    <property type="molecule type" value="Genomic_DNA"/>
</dbReference>
<dbReference type="RefSeq" id="WP_011377630.1">
    <property type="nucleotide sequence ID" value="NZ_CP130602.1"/>
</dbReference>
<dbReference type="SMR" id="Q31QR1"/>
<dbReference type="STRING" id="1140.Synpcc7942_0576"/>
<dbReference type="PaxDb" id="1140-Synpcc7942_0576"/>
<dbReference type="GeneID" id="72429402"/>
<dbReference type="KEGG" id="syf:Synpcc7942_0576"/>
<dbReference type="eggNOG" id="COG2022">
    <property type="taxonomic scope" value="Bacteria"/>
</dbReference>
<dbReference type="HOGENOM" id="CLU_062233_1_0_3"/>
<dbReference type="BioCyc" id="SYNEL:SYNPCC7942_0576-MONOMER"/>
<dbReference type="UniPathway" id="UPA00060"/>
<dbReference type="Proteomes" id="UP000889800">
    <property type="component" value="Chromosome"/>
</dbReference>
<dbReference type="GO" id="GO:0005737">
    <property type="term" value="C:cytoplasm"/>
    <property type="evidence" value="ECO:0007669"/>
    <property type="project" value="UniProtKB-SubCell"/>
</dbReference>
<dbReference type="GO" id="GO:1990107">
    <property type="term" value="F:thiazole synthase activity"/>
    <property type="evidence" value="ECO:0007669"/>
    <property type="project" value="UniProtKB-EC"/>
</dbReference>
<dbReference type="GO" id="GO:0009229">
    <property type="term" value="P:thiamine diphosphate biosynthetic process"/>
    <property type="evidence" value="ECO:0007669"/>
    <property type="project" value="UniProtKB-UniRule"/>
</dbReference>
<dbReference type="CDD" id="cd04728">
    <property type="entry name" value="ThiG"/>
    <property type="match status" value="1"/>
</dbReference>
<dbReference type="Gene3D" id="3.20.20.70">
    <property type="entry name" value="Aldolase class I"/>
    <property type="match status" value="1"/>
</dbReference>
<dbReference type="HAMAP" id="MF_00443">
    <property type="entry name" value="ThiG"/>
    <property type="match status" value="1"/>
</dbReference>
<dbReference type="InterPro" id="IPR013785">
    <property type="entry name" value="Aldolase_TIM"/>
</dbReference>
<dbReference type="InterPro" id="IPR033983">
    <property type="entry name" value="Thiazole_synthase_ThiG"/>
</dbReference>
<dbReference type="InterPro" id="IPR008867">
    <property type="entry name" value="ThiG"/>
</dbReference>
<dbReference type="PANTHER" id="PTHR34266">
    <property type="entry name" value="THIAZOLE SYNTHASE"/>
    <property type="match status" value="1"/>
</dbReference>
<dbReference type="PANTHER" id="PTHR34266:SF2">
    <property type="entry name" value="THIAZOLE SYNTHASE"/>
    <property type="match status" value="1"/>
</dbReference>
<dbReference type="Pfam" id="PF05690">
    <property type="entry name" value="ThiG"/>
    <property type="match status" value="1"/>
</dbReference>
<dbReference type="SUPFAM" id="SSF110399">
    <property type="entry name" value="ThiG-like"/>
    <property type="match status" value="1"/>
</dbReference>
<proteinExistence type="inferred from homology"/>
<reference key="1">
    <citation type="submission" date="2005-08" db="EMBL/GenBank/DDBJ databases">
        <title>Complete sequence of chromosome 1 of Synechococcus elongatus PCC 7942.</title>
        <authorList>
            <consortium name="US DOE Joint Genome Institute"/>
            <person name="Copeland A."/>
            <person name="Lucas S."/>
            <person name="Lapidus A."/>
            <person name="Barry K."/>
            <person name="Detter J.C."/>
            <person name="Glavina T."/>
            <person name="Hammon N."/>
            <person name="Israni S."/>
            <person name="Pitluck S."/>
            <person name="Schmutz J."/>
            <person name="Larimer F."/>
            <person name="Land M."/>
            <person name="Kyrpides N."/>
            <person name="Lykidis A."/>
            <person name="Golden S."/>
            <person name="Richardson P."/>
        </authorList>
    </citation>
    <scope>NUCLEOTIDE SEQUENCE [LARGE SCALE GENOMIC DNA]</scope>
    <source>
        <strain>ATCC 33912 / PCC 7942 / FACHB-805</strain>
    </source>
</reference>
<sequence length="286" mass="30075">MENSCADAEFMVATPDTTADVLTIAGRSFRSRLMTGTGKYRSFEQMRASIAASGCEIVTVAVRRVQTNAPGHEGLAEALDWQKIWMLPNTAGCATAEEAIRVARLGREMAKLLGQEDNNFVKLEVIPDSRYLLPDPIGTLQAAEQLVKEGFAVLPYINADPLLAKRLEEVGCATVMPLGSPIGSGQGIRNEANIRIIVENAKVPVVVDAGIGTASEAAQAMELGADALLINTAIAQAEDPARMAQAMAMATIAGRLAFQAGRIPTRSAAIASSPQTGLVGQSPATV</sequence>
<organism>
    <name type="scientific">Synechococcus elongatus (strain ATCC 33912 / PCC 7942 / FACHB-805)</name>
    <name type="common">Anacystis nidulans R2</name>
    <dbReference type="NCBI Taxonomy" id="1140"/>
    <lineage>
        <taxon>Bacteria</taxon>
        <taxon>Bacillati</taxon>
        <taxon>Cyanobacteriota</taxon>
        <taxon>Cyanophyceae</taxon>
        <taxon>Synechococcales</taxon>
        <taxon>Synechococcaceae</taxon>
        <taxon>Synechococcus</taxon>
    </lineage>
</organism>
<evidence type="ECO:0000255" key="1">
    <source>
        <dbReference type="HAMAP-Rule" id="MF_00443"/>
    </source>
</evidence>
<comment type="function">
    <text evidence="1">Catalyzes the rearrangement of 1-deoxy-D-xylulose 5-phosphate (DXP) to produce the thiazole phosphate moiety of thiamine. Sulfur is provided by the thiocarboxylate moiety of the carrier protein ThiS. In vitro, sulfur can be provided by H(2)S.</text>
</comment>
<comment type="catalytic activity">
    <reaction evidence="1">
        <text>[ThiS sulfur-carrier protein]-C-terminal-Gly-aminoethanethioate + 2-iminoacetate + 1-deoxy-D-xylulose 5-phosphate = [ThiS sulfur-carrier protein]-C-terminal Gly-Gly + 2-[(2R,5Z)-2-carboxy-4-methylthiazol-5(2H)-ylidene]ethyl phosphate + 2 H2O + H(+)</text>
        <dbReference type="Rhea" id="RHEA:26297"/>
        <dbReference type="Rhea" id="RHEA-COMP:12909"/>
        <dbReference type="Rhea" id="RHEA-COMP:19908"/>
        <dbReference type="ChEBI" id="CHEBI:15377"/>
        <dbReference type="ChEBI" id="CHEBI:15378"/>
        <dbReference type="ChEBI" id="CHEBI:57792"/>
        <dbReference type="ChEBI" id="CHEBI:62899"/>
        <dbReference type="ChEBI" id="CHEBI:77846"/>
        <dbReference type="ChEBI" id="CHEBI:90778"/>
        <dbReference type="ChEBI" id="CHEBI:232372"/>
        <dbReference type="EC" id="2.8.1.10"/>
    </reaction>
</comment>
<comment type="pathway">
    <text evidence="1">Cofactor biosynthesis; thiamine diphosphate biosynthesis.</text>
</comment>
<comment type="subunit">
    <text evidence="1">Homotetramer. Forms heterodimers with either ThiH or ThiS.</text>
</comment>
<comment type="subcellular location">
    <subcellularLocation>
        <location evidence="1">Cytoplasm</location>
    </subcellularLocation>
</comment>
<comment type="similarity">
    <text evidence="1">Belongs to the ThiG family.</text>
</comment>
<protein>
    <recommendedName>
        <fullName evidence="1">Thiazole synthase</fullName>
        <ecNumber evidence="1">2.8.1.10</ecNumber>
    </recommendedName>
</protein>
<keyword id="KW-0963">Cytoplasm</keyword>
<keyword id="KW-1185">Reference proteome</keyword>
<keyword id="KW-0704">Schiff base</keyword>
<keyword id="KW-0784">Thiamine biosynthesis</keyword>
<keyword id="KW-0808">Transferase</keyword>
<feature type="chain" id="PRO_0000236371" description="Thiazole synthase">
    <location>
        <begin position="1"/>
        <end position="286"/>
    </location>
</feature>
<feature type="active site" description="Schiff-base intermediate with DXP" evidence="1">
    <location>
        <position position="122"/>
    </location>
</feature>
<feature type="binding site" evidence="1">
    <location>
        <position position="183"/>
    </location>
    <ligand>
        <name>1-deoxy-D-xylulose 5-phosphate</name>
        <dbReference type="ChEBI" id="CHEBI:57792"/>
    </ligand>
</feature>
<feature type="binding site" evidence="1">
    <location>
        <begin position="209"/>
        <end position="210"/>
    </location>
    <ligand>
        <name>1-deoxy-D-xylulose 5-phosphate</name>
        <dbReference type="ChEBI" id="CHEBI:57792"/>
    </ligand>
</feature>
<feature type="binding site" evidence="1">
    <location>
        <begin position="231"/>
        <end position="232"/>
    </location>
    <ligand>
        <name>1-deoxy-D-xylulose 5-phosphate</name>
        <dbReference type="ChEBI" id="CHEBI:57792"/>
    </ligand>
</feature>